<dbReference type="EMBL" id="CU928145">
    <property type="protein sequence ID" value="CAU99775.1"/>
    <property type="molecule type" value="Genomic_DNA"/>
</dbReference>
<dbReference type="RefSeq" id="WP_000189314.1">
    <property type="nucleotide sequence ID" value="NC_011748.1"/>
</dbReference>
<dbReference type="SMR" id="B7LH93"/>
<dbReference type="GeneID" id="93778829"/>
<dbReference type="KEGG" id="eck:EC55989_3575"/>
<dbReference type="HOGENOM" id="CLU_135650_0_1_6"/>
<dbReference type="Proteomes" id="UP000000746">
    <property type="component" value="Chromosome"/>
</dbReference>
<dbReference type="CDD" id="cd10456">
    <property type="entry name" value="GIY-YIG_UPF0213"/>
    <property type="match status" value="1"/>
</dbReference>
<dbReference type="FunFam" id="3.40.1440.10:FF:000002">
    <property type="entry name" value="UPF0213 protein YhbQ"/>
    <property type="match status" value="1"/>
</dbReference>
<dbReference type="Gene3D" id="3.40.1440.10">
    <property type="entry name" value="GIY-YIG endonuclease"/>
    <property type="match status" value="1"/>
</dbReference>
<dbReference type="HAMAP" id="MF_01029">
    <property type="entry name" value="UPF0213"/>
    <property type="match status" value="1"/>
</dbReference>
<dbReference type="InterPro" id="IPR000305">
    <property type="entry name" value="GIY-YIG_endonuc"/>
</dbReference>
<dbReference type="InterPro" id="IPR035901">
    <property type="entry name" value="GIY-YIG_endonuc_sf"/>
</dbReference>
<dbReference type="InterPro" id="IPR050190">
    <property type="entry name" value="UPF0213_domain"/>
</dbReference>
<dbReference type="InterPro" id="IPR022992">
    <property type="entry name" value="UPF0213_GIY-YIG_endonuc"/>
</dbReference>
<dbReference type="PANTHER" id="PTHR34477">
    <property type="entry name" value="UPF0213 PROTEIN YHBQ"/>
    <property type="match status" value="1"/>
</dbReference>
<dbReference type="PANTHER" id="PTHR34477:SF1">
    <property type="entry name" value="UPF0213 PROTEIN YHBQ"/>
    <property type="match status" value="1"/>
</dbReference>
<dbReference type="Pfam" id="PF01541">
    <property type="entry name" value="GIY-YIG"/>
    <property type="match status" value="1"/>
</dbReference>
<dbReference type="SMART" id="SM00465">
    <property type="entry name" value="GIYc"/>
    <property type="match status" value="1"/>
</dbReference>
<dbReference type="SUPFAM" id="SSF82771">
    <property type="entry name" value="GIY-YIG endonuclease"/>
    <property type="match status" value="1"/>
</dbReference>
<dbReference type="PROSITE" id="PS50164">
    <property type="entry name" value="GIY_YIG"/>
    <property type="match status" value="1"/>
</dbReference>
<accession>B7LH93</accession>
<proteinExistence type="inferred from homology"/>
<gene>
    <name evidence="1" type="primary">yhbQ</name>
    <name type="ordered locus">EC55989_3575</name>
</gene>
<evidence type="ECO:0000255" key="1">
    <source>
        <dbReference type="HAMAP-Rule" id="MF_01029"/>
    </source>
</evidence>
<reference key="1">
    <citation type="journal article" date="2009" name="PLoS Genet.">
        <title>Organised genome dynamics in the Escherichia coli species results in highly diverse adaptive paths.</title>
        <authorList>
            <person name="Touchon M."/>
            <person name="Hoede C."/>
            <person name="Tenaillon O."/>
            <person name="Barbe V."/>
            <person name="Baeriswyl S."/>
            <person name="Bidet P."/>
            <person name="Bingen E."/>
            <person name="Bonacorsi S."/>
            <person name="Bouchier C."/>
            <person name="Bouvet O."/>
            <person name="Calteau A."/>
            <person name="Chiapello H."/>
            <person name="Clermont O."/>
            <person name="Cruveiller S."/>
            <person name="Danchin A."/>
            <person name="Diard M."/>
            <person name="Dossat C."/>
            <person name="Karoui M.E."/>
            <person name="Frapy E."/>
            <person name="Garry L."/>
            <person name="Ghigo J.M."/>
            <person name="Gilles A.M."/>
            <person name="Johnson J."/>
            <person name="Le Bouguenec C."/>
            <person name="Lescat M."/>
            <person name="Mangenot S."/>
            <person name="Martinez-Jehanne V."/>
            <person name="Matic I."/>
            <person name="Nassif X."/>
            <person name="Oztas S."/>
            <person name="Petit M.A."/>
            <person name="Pichon C."/>
            <person name="Rouy Z."/>
            <person name="Ruf C.S."/>
            <person name="Schneider D."/>
            <person name="Tourret J."/>
            <person name="Vacherie B."/>
            <person name="Vallenet D."/>
            <person name="Medigue C."/>
            <person name="Rocha E.P.C."/>
            <person name="Denamur E."/>
        </authorList>
    </citation>
    <scope>NUCLEOTIDE SEQUENCE [LARGE SCALE GENOMIC DNA]</scope>
    <source>
        <strain>55989 / EAEC</strain>
    </source>
</reference>
<protein>
    <recommendedName>
        <fullName evidence="1">UPF0213 protein YhbQ</fullName>
    </recommendedName>
</protein>
<comment type="similarity">
    <text evidence="1">Belongs to the UPF0213 family.</text>
</comment>
<name>YHBQ_ECO55</name>
<sequence>MTPWFLYLIRTADNKLYTGITTDVERRYQQHQSGKGAKALRGKGELTLAFSAPVGDRSLALRAEYRVKQLTKRQKERLVAEGAGFAELLSSLQTPEIKSD</sequence>
<organism>
    <name type="scientific">Escherichia coli (strain 55989 / EAEC)</name>
    <dbReference type="NCBI Taxonomy" id="585055"/>
    <lineage>
        <taxon>Bacteria</taxon>
        <taxon>Pseudomonadati</taxon>
        <taxon>Pseudomonadota</taxon>
        <taxon>Gammaproteobacteria</taxon>
        <taxon>Enterobacterales</taxon>
        <taxon>Enterobacteriaceae</taxon>
        <taxon>Escherichia</taxon>
    </lineage>
</organism>
<keyword id="KW-1185">Reference proteome</keyword>
<feature type="chain" id="PRO_1000149382" description="UPF0213 protein YhbQ">
    <location>
        <begin position="1"/>
        <end position="100"/>
    </location>
</feature>
<feature type="domain" description="GIY-YIG" evidence="1">
    <location>
        <begin position="2"/>
        <end position="77"/>
    </location>
</feature>